<evidence type="ECO:0000250" key="1"/>
<evidence type="ECO:0000305" key="2"/>
<evidence type="ECO:0007829" key="3">
    <source>
        <dbReference type="PDB" id="6JKI"/>
    </source>
</evidence>
<dbReference type="EC" id="2.1.1.228"/>
<dbReference type="EMBL" id="AE004091">
    <property type="protein sequence ID" value="AAG07130.1"/>
    <property type="molecule type" value="Genomic_DNA"/>
</dbReference>
<dbReference type="PIR" id="C83178">
    <property type="entry name" value="C83178"/>
</dbReference>
<dbReference type="RefSeq" id="NP_252432.1">
    <property type="nucleotide sequence ID" value="NC_002516.2"/>
</dbReference>
<dbReference type="RefSeq" id="WP_003119312.1">
    <property type="nucleotide sequence ID" value="NZ_QZGE01000001.1"/>
</dbReference>
<dbReference type="PDB" id="5ZHM">
    <property type="method" value="X-ray"/>
    <property type="resolution" value="2.76 A"/>
    <property type="chains" value="A/B=5-250"/>
</dbReference>
<dbReference type="PDB" id="5ZHN">
    <property type="method" value="X-ray"/>
    <property type="resolution" value="2.65 A"/>
    <property type="chains" value="A/B=5-250"/>
</dbReference>
<dbReference type="PDB" id="6AFK">
    <property type="method" value="X-ray"/>
    <property type="resolution" value="2.75 A"/>
    <property type="chains" value="A/B=5-250"/>
</dbReference>
<dbReference type="PDB" id="6JKI">
    <property type="method" value="X-ray"/>
    <property type="resolution" value="2.59 A"/>
    <property type="chains" value="A/B=5-252"/>
</dbReference>
<dbReference type="PDB" id="6JOE">
    <property type="method" value="X-ray"/>
    <property type="resolution" value="2.21 A"/>
    <property type="chains" value="A/B=5-250"/>
</dbReference>
<dbReference type="PDBsum" id="5ZHM"/>
<dbReference type="PDBsum" id="5ZHN"/>
<dbReference type="PDBsum" id="6AFK"/>
<dbReference type="PDBsum" id="6JKI"/>
<dbReference type="PDBsum" id="6JOE"/>
<dbReference type="SMR" id="Q9HXQ1"/>
<dbReference type="FunCoup" id="Q9HXQ1">
    <property type="interactions" value="595"/>
</dbReference>
<dbReference type="STRING" id="208964.PA3743"/>
<dbReference type="BindingDB" id="Q9HXQ1"/>
<dbReference type="ChEMBL" id="CHEMBL4523932"/>
<dbReference type="PaxDb" id="208964-PA3743"/>
<dbReference type="GeneID" id="77219763"/>
<dbReference type="GeneID" id="880357"/>
<dbReference type="KEGG" id="pae:PA3743"/>
<dbReference type="PATRIC" id="fig|208964.12.peg.3915"/>
<dbReference type="PseudoCAP" id="PA3743"/>
<dbReference type="HOGENOM" id="CLU_047363_0_1_6"/>
<dbReference type="InParanoid" id="Q9HXQ1"/>
<dbReference type="OrthoDB" id="9807416at2"/>
<dbReference type="PhylomeDB" id="Q9HXQ1"/>
<dbReference type="BioCyc" id="PAER208964:G1FZ6-3814-MONOMER"/>
<dbReference type="Proteomes" id="UP000002438">
    <property type="component" value="Chromosome"/>
</dbReference>
<dbReference type="GO" id="GO:0005829">
    <property type="term" value="C:cytosol"/>
    <property type="evidence" value="ECO:0000318"/>
    <property type="project" value="GO_Central"/>
</dbReference>
<dbReference type="GO" id="GO:0052906">
    <property type="term" value="F:tRNA (guanine(37)-N1)-methyltransferase activity"/>
    <property type="evidence" value="ECO:0000318"/>
    <property type="project" value="GO_Central"/>
</dbReference>
<dbReference type="GO" id="GO:0002939">
    <property type="term" value="P:tRNA N1-guanine methylation"/>
    <property type="evidence" value="ECO:0000318"/>
    <property type="project" value="GO_Central"/>
</dbReference>
<dbReference type="CDD" id="cd18080">
    <property type="entry name" value="TrmD-like"/>
    <property type="match status" value="1"/>
</dbReference>
<dbReference type="FunFam" id="1.10.1270.20:FF:000001">
    <property type="entry name" value="tRNA (guanine-N(1)-)-methyltransferase"/>
    <property type="match status" value="1"/>
</dbReference>
<dbReference type="FunFam" id="3.40.1280.10:FF:000001">
    <property type="entry name" value="tRNA (guanine-N(1)-)-methyltransferase"/>
    <property type="match status" value="1"/>
</dbReference>
<dbReference type="Gene3D" id="3.40.1280.10">
    <property type="match status" value="1"/>
</dbReference>
<dbReference type="Gene3D" id="1.10.1270.20">
    <property type="entry name" value="tRNA(m1g37)methyltransferase, domain 2"/>
    <property type="match status" value="1"/>
</dbReference>
<dbReference type="HAMAP" id="MF_00605">
    <property type="entry name" value="TrmD"/>
    <property type="match status" value="1"/>
</dbReference>
<dbReference type="InterPro" id="IPR029028">
    <property type="entry name" value="Alpha/beta_knot_MTases"/>
</dbReference>
<dbReference type="InterPro" id="IPR023148">
    <property type="entry name" value="tRNA_m1G_MeTrfase_C_sf"/>
</dbReference>
<dbReference type="InterPro" id="IPR002649">
    <property type="entry name" value="tRNA_m1G_MeTrfase_TrmD"/>
</dbReference>
<dbReference type="InterPro" id="IPR029026">
    <property type="entry name" value="tRNA_m1G_MTases_N"/>
</dbReference>
<dbReference type="InterPro" id="IPR016009">
    <property type="entry name" value="tRNA_MeTrfase_TRMD/TRM10"/>
</dbReference>
<dbReference type="NCBIfam" id="NF000648">
    <property type="entry name" value="PRK00026.1"/>
    <property type="match status" value="1"/>
</dbReference>
<dbReference type="NCBIfam" id="TIGR00088">
    <property type="entry name" value="trmD"/>
    <property type="match status" value="1"/>
</dbReference>
<dbReference type="PANTHER" id="PTHR46417">
    <property type="entry name" value="TRNA (GUANINE-N(1)-)-METHYLTRANSFERASE"/>
    <property type="match status" value="1"/>
</dbReference>
<dbReference type="PANTHER" id="PTHR46417:SF1">
    <property type="entry name" value="TRNA (GUANINE-N(1)-)-METHYLTRANSFERASE"/>
    <property type="match status" value="1"/>
</dbReference>
<dbReference type="Pfam" id="PF01746">
    <property type="entry name" value="tRNA_m1G_MT"/>
    <property type="match status" value="1"/>
</dbReference>
<dbReference type="PIRSF" id="PIRSF000386">
    <property type="entry name" value="tRNA_mtase"/>
    <property type="match status" value="1"/>
</dbReference>
<dbReference type="SUPFAM" id="SSF75217">
    <property type="entry name" value="alpha/beta knot"/>
    <property type="match status" value="1"/>
</dbReference>
<gene>
    <name type="primary">trmD</name>
    <name type="ordered locus">PA3743</name>
</gene>
<name>TRMD_PSEAE</name>
<sequence length="252" mass="28359">MDKRLWVGVVSIFPEMFRAISDYGITSRAVKQGLLTLTCWNPRDYTEDRHQTVDDRPFGGGPGMVMKIKPLEGALADARQAAGGRKAKVIYLSPQGRQLTQAGVRELAEEEALILIAGRYEGIDERFIEEHVDEEWSIGDYVLSGGELPAMVLVDAVTRLLPGALGHADSAEEDSFTDGLLDCPHYTRPEVYADKRVPEVLLSGNHEHIRRWRLQQALGRTWERRADLLDSRSLSGEEQKLLAEYIRQRDDS</sequence>
<comment type="function">
    <text evidence="1">Specifically methylates guanosine-37 in various tRNAs.</text>
</comment>
<comment type="catalytic activity">
    <reaction>
        <text>guanosine(37) in tRNA + S-adenosyl-L-methionine = N(1)-methylguanosine(37) in tRNA + S-adenosyl-L-homocysteine + H(+)</text>
        <dbReference type="Rhea" id="RHEA:36899"/>
        <dbReference type="Rhea" id="RHEA-COMP:10145"/>
        <dbReference type="Rhea" id="RHEA-COMP:10147"/>
        <dbReference type="ChEBI" id="CHEBI:15378"/>
        <dbReference type="ChEBI" id="CHEBI:57856"/>
        <dbReference type="ChEBI" id="CHEBI:59789"/>
        <dbReference type="ChEBI" id="CHEBI:73542"/>
        <dbReference type="ChEBI" id="CHEBI:74269"/>
        <dbReference type="EC" id="2.1.1.228"/>
    </reaction>
</comment>
<comment type="subunit">
    <text evidence="1">Homodimer.</text>
</comment>
<comment type="subcellular location">
    <subcellularLocation>
        <location evidence="2">Cytoplasm</location>
    </subcellularLocation>
</comment>
<comment type="similarity">
    <text evidence="2">Belongs to the RNA methyltransferase TrmD family.</text>
</comment>
<organism>
    <name type="scientific">Pseudomonas aeruginosa (strain ATCC 15692 / DSM 22644 / CIP 104116 / JCM 14847 / LMG 12228 / 1C / PRS 101 / PAO1)</name>
    <dbReference type="NCBI Taxonomy" id="208964"/>
    <lineage>
        <taxon>Bacteria</taxon>
        <taxon>Pseudomonadati</taxon>
        <taxon>Pseudomonadota</taxon>
        <taxon>Gammaproteobacteria</taxon>
        <taxon>Pseudomonadales</taxon>
        <taxon>Pseudomonadaceae</taxon>
        <taxon>Pseudomonas</taxon>
    </lineage>
</organism>
<accession>Q9HXQ1</accession>
<protein>
    <recommendedName>
        <fullName>tRNA (guanine-N(1)-)-methyltransferase</fullName>
        <ecNumber>2.1.1.228</ecNumber>
    </recommendedName>
    <alternativeName>
        <fullName>M1G-methyltransferase</fullName>
    </alternativeName>
    <alternativeName>
        <fullName>tRNA [GM37] methyltransferase</fullName>
    </alternativeName>
</protein>
<reference key="1">
    <citation type="journal article" date="2000" name="Nature">
        <title>Complete genome sequence of Pseudomonas aeruginosa PAO1, an opportunistic pathogen.</title>
        <authorList>
            <person name="Stover C.K."/>
            <person name="Pham X.-Q.T."/>
            <person name="Erwin A.L."/>
            <person name="Mizoguchi S.D."/>
            <person name="Warrener P."/>
            <person name="Hickey M.J."/>
            <person name="Brinkman F.S.L."/>
            <person name="Hufnagle W.O."/>
            <person name="Kowalik D.J."/>
            <person name="Lagrou M."/>
            <person name="Garber R.L."/>
            <person name="Goltry L."/>
            <person name="Tolentino E."/>
            <person name="Westbrock-Wadman S."/>
            <person name="Yuan Y."/>
            <person name="Brody L.L."/>
            <person name="Coulter S.N."/>
            <person name="Folger K.R."/>
            <person name="Kas A."/>
            <person name="Larbig K."/>
            <person name="Lim R.M."/>
            <person name="Smith K.A."/>
            <person name="Spencer D.H."/>
            <person name="Wong G.K.-S."/>
            <person name="Wu Z."/>
            <person name="Paulsen I.T."/>
            <person name="Reizer J."/>
            <person name="Saier M.H. Jr."/>
            <person name="Hancock R.E.W."/>
            <person name="Lory S."/>
            <person name="Olson M.V."/>
        </authorList>
    </citation>
    <scope>NUCLEOTIDE SEQUENCE [LARGE SCALE GENOMIC DNA]</scope>
    <source>
        <strain>ATCC 15692 / DSM 22644 / CIP 104116 / JCM 14847 / LMG 12228 / 1C / PRS 101 / PAO1</strain>
    </source>
</reference>
<feature type="chain" id="PRO_0000060433" description="tRNA (guanine-N(1)-)-methyltransferase">
    <location>
        <begin position="1"/>
        <end position="252"/>
    </location>
</feature>
<feature type="binding site" evidence="1">
    <location>
        <position position="118"/>
    </location>
    <ligand>
        <name>S-adenosyl-L-methionine</name>
        <dbReference type="ChEBI" id="CHEBI:59789"/>
    </ligand>
</feature>
<feature type="binding site" evidence="1">
    <location>
        <begin position="138"/>
        <end position="143"/>
    </location>
    <ligand>
        <name>S-adenosyl-L-methionine</name>
        <dbReference type="ChEBI" id="CHEBI:59789"/>
    </ligand>
</feature>
<feature type="strand" evidence="3">
    <location>
        <begin position="5"/>
        <end position="10"/>
    </location>
</feature>
<feature type="helix" evidence="3">
    <location>
        <begin position="14"/>
        <end position="17"/>
    </location>
</feature>
<feature type="helix" evidence="3">
    <location>
        <begin position="18"/>
        <end position="21"/>
    </location>
</feature>
<feature type="helix" evidence="3">
    <location>
        <begin position="24"/>
        <end position="31"/>
    </location>
</feature>
<feature type="strand" evidence="3">
    <location>
        <begin position="34"/>
        <end position="40"/>
    </location>
</feature>
<feature type="helix" evidence="3">
    <location>
        <begin position="42"/>
        <end position="44"/>
    </location>
</feature>
<feature type="helix" evidence="3">
    <location>
        <begin position="68"/>
        <end position="82"/>
    </location>
</feature>
<feature type="strand" evidence="3">
    <location>
        <begin position="87"/>
        <end position="92"/>
    </location>
</feature>
<feature type="strand" evidence="3">
    <location>
        <begin position="96"/>
        <end position="98"/>
    </location>
</feature>
<feature type="helix" evidence="3">
    <location>
        <begin position="101"/>
        <end position="107"/>
    </location>
</feature>
<feature type="strand" evidence="3">
    <location>
        <begin position="111"/>
        <end position="117"/>
    </location>
</feature>
<feature type="helix" evidence="3">
    <location>
        <begin position="125"/>
        <end position="131"/>
    </location>
</feature>
<feature type="strand" evidence="3">
    <location>
        <begin position="133"/>
        <end position="141"/>
    </location>
</feature>
<feature type="helix" evidence="3">
    <location>
        <begin position="147"/>
        <end position="158"/>
    </location>
</feature>
<feature type="strand" evidence="3">
    <location>
        <begin position="177"/>
        <end position="179"/>
    </location>
</feature>
<feature type="strand" evidence="3">
    <location>
        <begin position="190"/>
        <end position="192"/>
    </location>
</feature>
<feature type="helix" evidence="3">
    <location>
        <begin position="199"/>
        <end position="203"/>
    </location>
</feature>
<feature type="helix" evidence="3">
    <location>
        <begin position="206"/>
        <end position="224"/>
    </location>
</feature>
<feature type="helix" evidence="3">
    <location>
        <begin position="226"/>
        <end position="230"/>
    </location>
</feature>
<feature type="helix" evidence="3">
    <location>
        <begin position="236"/>
        <end position="247"/>
    </location>
</feature>
<keyword id="KW-0002">3D-structure</keyword>
<keyword id="KW-0963">Cytoplasm</keyword>
<keyword id="KW-0489">Methyltransferase</keyword>
<keyword id="KW-1185">Reference proteome</keyword>
<keyword id="KW-0949">S-adenosyl-L-methionine</keyword>
<keyword id="KW-0808">Transferase</keyword>
<keyword id="KW-0819">tRNA processing</keyword>
<proteinExistence type="evidence at protein level"/>